<dbReference type="EC" id="2.3.1.180" evidence="1"/>
<dbReference type="EMBL" id="CR767821">
    <property type="protein sequence ID" value="CAH58302.1"/>
    <property type="molecule type" value="Genomic_DNA"/>
</dbReference>
<dbReference type="EMBL" id="CR925678">
    <property type="protein sequence ID" value="CAI27095.1"/>
    <property type="molecule type" value="Genomic_DNA"/>
</dbReference>
<dbReference type="RefSeq" id="WP_011155252.1">
    <property type="nucleotide sequence ID" value="NC_005295.2"/>
</dbReference>
<dbReference type="SMR" id="Q5HAV9"/>
<dbReference type="GeneID" id="33057892"/>
<dbReference type="KEGG" id="eru:Erum5720"/>
<dbReference type="KEGG" id="erw:ERWE_CDS_06010"/>
<dbReference type="eggNOG" id="COG0332">
    <property type="taxonomic scope" value="Bacteria"/>
</dbReference>
<dbReference type="HOGENOM" id="CLU_039592_3_1_5"/>
<dbReference type="UniPathway" id="UPA00094"/>
<dbReference type="Proteomes" id="UP000001021">
    <property type="component" value="Chromosome"/>
</dbReference>
<dbReference type="GO" id="GO:0005737">
    <property type="term" value="C:cytoplasm"/>
    <property type="evidence" value="ECO:0007669"/>
    <property type="project" value="UniProtKB-SubCell"/>
</dbReference>
<dbReference type="GO" id="GO:0004315">
    <property type="term" value="F:3-oxoacyl-[acyl-carrier-protein] synthase activity"/>
    <property type="evidence" value="ECO:0007669"/>
    <property type="project" value="InterPro"/>
</dbReference>
<dbReference type="GO" id="GO:0033818">
    <property type="term" value="F:beta-ketoacyl-acyl-carrier-protein synthase III activity"/>
    <property type="evidence" value="ECO:0007669"/>
    <property type="project" value="UniProtKB-UniRule"/>
</dbReference>
<dbReference type="GO" id="GO:0006633">
    <property type="term" value="P:fatty acid biosynthetic process"/>
    <property type="evidence" value="ECO:0007669"/>
    <property type="project" value="UniProtKB-UniRule"/>
</dbReference>
<dbReference type="GO" id="GO:0044550">
    <property type="term" value="P:secondary metabolite biosynthetic process"/>
    <property type="evidence" value="ECO:0007669"/>
    <property type="project" value="TreeGrafter"/>
</dbReference>
<dbReference type="CDD" id="cd00830">
    <property type="entry name" value="KAS_III"/>
    <property type="match status" value="1"/>
</dbReference>
<dbReference type="FunFam" id="3.40.47.10:FF:000004">
    <property type="entry name" value="3-oxoacyl-[acyl-carrier-protein] synthase 3"/>
    <property type="match status" value="1"/>
</dbReference>
<dbReference type="Gene3D" id="3.40.47.10">
    <property type="match status" value="1"/>
</dbReference>
<dbReference type="HAMAP" id="MF_01815">
    <property type="entry name" value="FabH"/>
    <property type="match status" value="1"/>
</dbReference>
<dbReference type="InterPro" id="IPR013747">
    <property type="entry name" value="ACP_syn_III_C"/>
</dbReference>
<dbReference type="InterPro" id="IPR013751">
    <property type="entry name" value="ACP_syn_III_N"/>
</dbReference>
<dbReference type="InterPro" id="IPR004655">
    <property type="entry name" value="FabH"/>
</dbReference>
<dbReference type="InterPro" id="IPR016039">
    <property type="entry name" value="Thiolase-like"/>
</dbReference>
<dbReference type="NCBIfam" id="TIGR00747">
    <property type="entry name" value="fabH"/>
    <property type="match status" value="1"/>
</dbReference>
<dbReference type="NCBIfam" id="NF006829">
    <property type="entry name" value="PRK09352.1"/>
    <property type="match status" value="1"/>
</dbReference>
<dbReference type="PANTHER" id="PTHR34069">
    <property type="entry name" value="3-OXOACYL-[ACYL-CARRIER-PROTEIN] SYNTHASE 3"/>
    <property type="match status" value="1"/>
</dbReference>
<dbReference type="PANTHER" id="PTHR34069:SF2">
    <property type="entry name" value="BETA-KETOACYL-[ACYL-CARRIER-PROTEIN] SYNTHASE III"/>
    <property type="match status" value="1"/>
</dbReference>
<dbReference type="Pfam" id="PF08545">
    <property type="entry name" value="ACP_syn_III"/>
    <property type="match status" value="1"/>
</dbReference>
<dbReference type="Pfam" id="PF08541">
    <property type="entry name" value="ACP_syn_III_C"/>
    <property type="match status" value="1"/>
</dbReference>
<dbReference type="SUPFAM" id="SSF53901">
    <property type="entry name" value="Thiolase-like"/>
    <property type="match status" value="1"/>
</dbReference>
<keyword id="KW-0012">Acyltransferase</keyword>
<keyword id="KW-0963">Cytoplasm</keyword>
<keyword id="KW-0275">Fatty acid biosynthesis</keyword>
<keyword id="KW-0276">Fatty acid metabolism</keyword>
<keyword id="KW-0444">Lipid biosynthesis</keyword>
<keyword id="KW-0443">Lipid metabolism</keyword>
<keyword id="KW-0511">Multifunctional enzyme</keyword>
<keyword id="KW-0808">Transferase</keyword>
<accession>Q5HAV9</accession>
<accession>Q5FD52</accession>
<proteinExistence type="inferred from homology"/>
<protein>
    <recommendedName>
        <fullName evidence="1">Beta-ketoacyl-[acyl-carrier-protein] synthase III</fullName>
        <shortName evidence="1">Beta-ketoacyl-ACP synthase III</shortName>
        <shortName evidence="1">KAS III</shortName>
        <ecNumber evidence="1">2.3.1.180</ecNumber>
    </recommendedName>
    <alternativeName>
        <fullName evidence="1">3-oxoacyl-[acyl-carrier-protein] synthase 3</fullName>
    </alternativeName>
    <alternativeName>
        <fullName evidence="1">3-oxoacyl-[acyl-carrier-protein] synthase III</fullName>
    </alternativeName>
</protein>
<gene>
    <name evidence="1" type="primary">fabH</name>
    <name type="ordered locus">Erum5720</name>
    <name type="ordered locus">ERWE_CDS_06010</name>
</gene>
<comment type="function">
    <text evidence="1">Catalyzes the condensation reaction of fatty acid synthesis by the addition to an acyl acceptor of two carbons from malonyl-ACP. Catalyzes the first condensation reaction which initiates fatty acid synthesis and may therefore play a role in governing the total rate of fatty acid production. Possesses both acetoacetyl-ACP synthase and acetyl transacylase activities. Its substrate specificity determines the biosynthesis of branched-chain and/or straight-chain of fatty acids.</text>
</comment>
<comment type="catalytic activity">
    <reaction evidence="1">
        <text>malonyl-[ACP] + acetyl-CoA + H(+) = 3-oxobutanoyl-[ACP] + CO2 + CoA</text>
        <dbReference type="Rhea" id="RHEA:12080"/>
        <dbReference type="Rhea" id="RHEA-COMP:9623"/>
        <dbReference type="Rhea" id="RHEA-COMP:9625"/>
        <dbReference type="ChEBI" id="CHEBI:15378"/>
        <dbReference type="ChEBI" id="CHEBI:16526"/>
        <dbReference type="ChEBI" id="CHEBI:57287"/>
        <dbReference type="ChEBI" id="CHEBI:57288"/>
        <dbReference type="ChEBI" id="CHEBI:78449"/>
        <dbReference type="ChEBI" id="CHEBI:78450"/>
        <dbReference type="EC" id="2.3.1.180"/>
    </reaction>
</comment>
<comment type="pathway">
    <text evidence="1">Lipid metabolism; fatty acid biosynthesis.</text>
</comment>
<comment type="subunit">
    <text evidence="1">Homodimer.</text>
</comment>
<comment type="subcellular location">
    <subcellularLocation>
        <location evidence="1">Cytoplasm</location>
    </subcellularLocation>
</comment>
<comment type="domain">
    <text evidence="1">The last Arg residue of the ACP-binding site is essential for the weak association between ACP/AcpP and FabH.</text>
</comment>
<comment type="similarity">
    <text evidence="1">Belongs to the thiolase-like superfamily. FabH family.</text>
</comment>
<organism>
    <name type="scientific">Ehrlichia ruminantium (strain Welgevonden)</name>
    <dbReference type="NCBI Taxonomy" id="254945"/>
    <lineage>
        <taxon>Bacteria</taxon>
        <taxon>Pseudomonadati</taxon>
        <taxon>Pseudomonadota</taxon>
        <taxon>Alphaproteobacteria</taxon>
        <taxon>Rickettsiales</taxon>
        <taxon>Anaplasmataceae</taxon>
        <taxon>Ehrlichia</taxon>
    </lineage>
</organism>
<sequence length="319" mass="34267">MRSSRILGIGSYLPKSLVTNDDLACTVATSDEWIVKRTGIRQRYIAADDQMTSDMAVEAAKLALNDSGINKQDVDLIVVATTTPDRTFPSCATIVQSKLECKNAFAFDIQAVCSGFIYAMAIADNFIKSGQVNVSLVIGAEVMSRILDWKDRSTCVLFGDGAGAVVLSNNSARNTGVISTILYSDGTLHNLLYTSGGTAYNGVAGTICMNGTVVFEHAIEKLSASIVEILNKNNLSIDEVNWFVLHQANIRIIELVARRLKIPSEKMVISINQHANTSAASIPLALSYAKNSGKLKQDDLVVLAAIGAGITWGVCLVRM</sequence>
<evidence type="ECO:0000255" key="1">
    <source>
        <dbReference type="HAMAP-Rule" id="MF_01815"/>
    </source>
</evidence>
<reference key="1">
    <citation type="journal article" date="2005" name="Proc. Natl. Acad. Sci. U.S.A.">
        <title>The genome of the heartwater agent Ehrlichia ruminantium contains multiple tandem repeats of actively variable copy number.</title>
        <authorList>
            <person name="Collins N.E."/>
            <person name="Liebenberg J."/>
            <person name="de Villiers E.P."/>
            <person name="Brayton K.A."/>
            <person name="Louw E."/>
            <person name="Pretorius A."/>
            <person name="Faber F.E."/>
            <person name="van Heerden H."/>
            <person name="Josemans A."/>
            <person name="van Kleef M."/>
            <person name="Steyn H.C."/>
            <person name="van Strijp M.F."/>
            <person name="Zweygarth E."/>
            <person name="Jongejan F."/>
            <person name="Maillard J.C."/>
            <person name="Berthier D."/>
            <person name="Botha M."/>
            <person name="Joubert F."/>
            <person name="Corton C.H."/>
            <person name="Thomson N.R."/>
            <person name="Allsopp M.T."/>
            <person name="Allsopp B.A."/>
        </authorList>
    </citation>
    <scope>NUCLEOTIDE SEQUENCE [LARGE SCALE GENOMIC DNA]</scope>
    <source>
        <strain>Welgevonden</strain>
    </source>
</reference>
<reference key="2">
    <citation type="journal article" date="2006" name="J. Bacteriol.">
        <title>Comparative genomic analysis of three strains of Ehrlichia ruminantium reveals an active process of genome size plasticity.</title>
        <authorList>
            <person name="Frutos R."/>
            <person name="Viari A."/>
            <person name="Ferraz C."/>
            <person name="Morgat A."/>
            <person name="Eychenie S."/>
            <person name="Kandassamy Y."/>
            <person name="Chantal I."/>
            <person name="Bensaid A."/>
            <person name="Coissac E."/>
            <person name="Vachiery N."/>
            <person name="Demaille J."/>
            <person name="Martinez D."/>
        </authorList>
    </citation>
    <scope>NUCLEOTIDE SEQUENCE [LARGE SCALE GENOMIC DNA]</scope>
    <source>
        <strain>Welgevonden</strain>
    </source>
</reference>
<feature type="chain" id="PRO_1000056360" description="Beta-ketoacyl-[acyl-carrier-protein] synthase III">
    <location>
        <begin position="1"/>
        <end position="319"/>
    </location>
</feature>
<feature type="region of interest" description="ACP-binding" evidence="1">
    <location>
        <begin position="247"/>
        <end position="251"/>
    </location>
</feature>
<feature type="active site" evidence="1">
    <location>
        <position position="113"/>
    </location>
</feature>
<feature type="active site" evidence="1">
    <location>
        <position position="246"/>
    </location>
</feature>
<feature type="active site" evidence="1">
    <location>
        <position position="276"/>
    </location>
</feature>
<name>FABH_EHRRW</name>